<gene>
    <name type="primary">CERT1</name>
    <name type="synonym">CERT</name>
    <name type="synonym">COL4A3BP</name>
</gene>
<sequence length="598" mass="68154">MSDNQSWNSSGSEEDPETESGPPVERCGVLSKWTNYIHGWQDRWVVLKNNTLSYYKSEDETEYGCRGSICLSKAVITPHDFDECRFDISVNDSVWYLRAQDPDHRQQWIDAIEQHKTESGYGSESSLRRHGSMVSLVSGASGYSATSTSSFKKGHSLREKLAEMETFRDILCRQVDTLQKYFDVCADAVSKDELQRDKVVEDDEDDFPTTRSDGDFLHNTNGNKEKLFPHVTPKGINGIDFKGEAITFKATTAGILATLSHCIELMVKREESWQKRHDKEMEKRRRLEEAYKNAMAELKKKPRFGGPDYEEGPNSLINEEEFFDAVEAALDRQDKIEEQSQSEKVRLHWPTPLPSGDAFSSVGTHRFVQKVEEMVQNHMTYSLQDVGGDANWQLVVEEGEMKVYRREVEENGIVLDPLKATHAVKGVTGHEVCNYFWSVDVRNDWETTIENFHVVETLADNAIIIYQTHKRVWPASQRDVLYLSAIRKIPALTENDPETWIVCNFSVDHDSAPLNNRCVRAKINVAMICQTLVSPPEGNQEISRDNILCKITYVANVNPGGWAPASVLRAVAKREYPKFLKRFTSYVQEKTAGKPILF</sequence>
<keyword id="KW-0175">Coiled coil</keyword>
<keyword id="KW-0963">Cytoplasm</keyword>
<keyword id="KW-0256">Endoplasmic reticulum</keyword>
<keyword id="KW-0333">Golgi apparatus</keyword>
<keyword id="KW-0445">Lipid transport</keyword>
<keyword id="KW-0597">Phosphoprotein</keyword>
<keyword id="KW-0813">Transport</keyword>
<evidence type="ECO:0000250" key="1">
    <source>
        <dbReference type="UniProtKB" id="Q9EQG9"/>
    </source>
</evidence>
<evidence type="ECO:0000250" key="2">
    <source>
        <dbReference type="UniProtKB" id="Q9Y5P4"/>
    </source>
</evidence>
<evidence type="ECO:0000255" key="3"/>
<evidence type="ECO:0000255" key="4">
    <source>
        <dbReference type="PROSITE-ProRule" id="PRU00145"/>
    </source>
</evidence>
<evidence type="ECO:0000255" key="5">
    <source>
        <dbReference type="PROSITE-ProRule" id="PRU00197"/>
    </source>
</evidence>
<evidence type="ECO:0000256" key="6">
    <source>
        <dbReference type="SAM" id="MobiDB-lite"/>
    </source>
</evidence>
<evidence type="ECO:0000269" key="7">
    <source>
    </source>
</evidence>
<evidence type="ECO:0000269" key="8">
    <source>
    </source>
</evidence>
<evidence type="ECO:0000305" key="9"/>
<accession>Q6VVX2</accession>
<reference key="1">
    <citation type="journal article" date="2003" name="Nature">
        <title>Molecular machinery for non-vesicular trafficking of ceramide.</title>
        <authorList>
            <person name="Hanada K."/>
            <person name="Kumagai K."/>
            <person name="Yasuda S."/>
            <person name="Miura Y."/>
            <person name="Kawano M."/>
            <person name="Fukasawa M."/>
            <person name="Nishijima M."/>
        </authorList>
    </citation>
    <scope>NUCLEOTIDE SEQUENCE [MRNA]</scope>
    <scope>VARIANT GLU-67</scope>
    <scope>FUNCTION</scope>
    <scope>SUBCELLULAR LOCATION</scope>
    <scope>CATALYTIC ACTIVITY</scope>
    <source>
        <tissue>Ovary</tissue>
    </source>
</reference>
<reference key="2">
    <citation type="journal article" date="2009" name="Mol. Biol. Cell">
        <title>Casein kinase I{gamma}2 down-regulates trafficking of ceramide in the synthesis of sphingomyelin.</title>
        <authorList>
            <person name="Tomishige N."/>
            <person name="Kumagai K."/>
            <person name="Kusuda J."/>
            <person name="Nishijima M."/>
            <person name="Hanada K."/>
        </authorList>
    </citation>
    <scope>PHOSPHORYLATION BY CSNK1G2/CK1</scope>
</reference>
<dbReference type="EMBL" id="AY323813">
    <property type="protein sequence ID" value="AAQ89690.1"/>
    <property type="molecule type" value="mRNA"/>
</dbReference>
<dbReference type="RefSeq" id="XP_007646800.1">
    <property type="nucleotide sequence ID" value="XM_007648610.1"/>
</dbReference>
<dbReference type="BMRB" id="Q6VVX2"/>
<dbReference type="SMR" id="Q6VVX2"/>
<dbReference type="SwissLipids" id="SLP:000001549"/>
<dbReference type="PaxDb" id="10029-NP_001230955.1"/>
<dbReference type="Ensembl" id="ENSCGRT00001025947.1">
    <property type="protein sequence ID" value="ENSCGRP00001021703.1"/>
    <property type="gene ID" value="ENSCGRG00001020451.1"/>
</dbReference>
<dbReference type="GeneID" id="100689038"/>
<dbReference type="CTD" id="10087"/>
<dbReference type="eggNOG" id="KOG1739">
    <property type="taxonomic scope" value="Eukaryota"/>
</dbReference>
<dbReference type="GeneTree" id="ENSGT00940000155123"/>
<dbReference type="OrthoDB" id="2344588at2759"/>
<dbReference type="PRO" id="PR:Q6VVX2"/>
<dbReference type="Proteomes" id="UP000694386">
    <property type="component" value="Unplaced"/>
</dbReference>
<dbReference type="Proteomes" id="UP001108280">
    <property type="component" value="Unplaced"/>
</dbReference>
<dbReference type="GO" id="GO:0005829">
    <property type="term" value="C:cytosol"/>
    <property type="evidence" value="ECO:0000314"/>
    <property type="project" value="UniProtKB"/>
</dbReference>
<dbReference type="GO" id="GO:0005783">
    <property type="term" value="C:endoplasmic reticulum"/>
    <property type="evidence" value="ECO:0007669"/>
    <property type="project" value="UniProtKB-SubCell"/>
</dbReference>
<dbReference type="GO" id="GO:0005794">
    <property type="term" value="C:Golgi apparatus"/>
    <property type="evidence" value="ECO:0000314"/>
    <property type="project" value="UniProtKB"/>
</dbReference>
<dbReference type="GO" id="GO:0120017">
    <property type="term" value="F:ceramide transfer activity"/>
    <property type="evidence" value="ECO:0000315"/>
    <property type="project" value="GO_Central"/>
</dbReference>
<dbReference type="GO" id="GO:0070273">
    <property type="term" value="F:phosphatidylinositol-4-phosphate binding"/>
    <property type="evidence" value="ECO:0000314"/>
    <property type="project" value="UniProtKB"/>
</dbReference>
<dbReference type="GO" id="GO:0035621">
    <property type="term" value="P:ER to Golgi ceramide transport"/>
    <property type="evidence" value="ECO:0000315"/>
    <property type="project" value="UniProtKB"/>
</dbReference>
<dbReference type="CDD" id="cd13283">
    <property type="entry name" value="PH_GPBP"/>
    <property type="match status" value="1"/>
</dbReference>
<dbReference type="CDD" id="cd08872">
    <property type="entry name" value="START_STARD11-like"/>
    <property type="match status" value="1"/>
</dbReference>
<dbReference type="FunFam" id="2.30.29.30:FF:000104">
    <property type="entry name" value="collagen type IV alpha-3-binding protein-like isoform X2"/>
    <property type="match status" value="1"/>
</dbReference>
<dbReference type="FunFam" id="3.30.530.20:FF:000003">
    <property type="entry name" value="Collagen type IV alpha-3-binding protein-like protein"/>
    <property type="match status" value="1"/>
</dbReference>
<dbReference type="Gene3D" id="3.30.530.20">
    <property type="match status" value="1"/>
</dbReference>
<dbReference type="Gene3D" id="2.30.29.30">
    <property type="entry name" value="Pleckstrin-homology domain (PH domain)/Phosphotyrosine-binding domain (PTB)"/>
    <property type="match status" value="1"/>
</dbReference>
<dbReference type="InterPro" id="IPR011993">
    <property type="entry name" value="PH-like_dom_sf"/>
</dbReference>
<dbReference type="InterPro" id="IPR001849">
    <property type="entry name" value="PH_domain"/>
</dbReference>
<dbReference type="InterPro" id="IPR041952">
    <property type="entry name" value="STARD11_START"/>
</dbReference>
<dbReference type="InterPro" id="IPR023393">
    <property type="entry name" value="START-like_dom_sf"/>
</dbReference>
<dbReference type="InterPro" id="IPR002913">
    <property type="entry name" value="START_lipid-bd_dom"/>
</dbReference>
<dbReference type="InterPro" id="IPR051213">
    <property type="entry name" value="START_lipid_transfer"/>
</dbReference>
<dbReference type="PANTHER" id="PTHR19308:SF53">
    <property type="entry name" value="CERAMIDE TRANSFER PROTEIN"/>
    <property type="match status" value="1"/>
</dbReference>
<dbReference type="PANTHER" id="PTHR19308">
    <property type="entry name" value="PHOSPHATIDYLCHOLINE TRANSFER PROTEIN"/>
    <property type="match status" value="1"/>
</dbReference>
<dbReference type="Pfam" id="PF00169">
    <property type="entry name" value="PH"/>
    <property type="match status" value="1"/>
</dbReference>
<dbReference type="Pfam" id="PF01852">
    <property type="entry name" value="START"/>
    <property type="match status" value="1"/>
</dbReference>
<dbReference type="SMART" id="SM00233">
    <property type="entry name" value="PH"/>
    <property type="match status" value="1"/>
</dbReference>
<dbReference type="SMART" id="SM00234">
    <property type="entry name" value="START"/>
    <property type="match status" value="1"/>
</dbReference>
<dbReference type="SUPFAM" id="SSF55961">
    <property type="entry name" value="Bet v1-like"/>
    <property type="match status" value="1"/>
</dbReference>
<dbReference type="SUPFAM" id="SSF50729">
    <property type="entry name" value="PH domain-like"/>
    <property type="match status" value="1"/>
</dbReference>
<dbReference type="PROSITE" id="PS50003">
    <property type="entry name" value="PH_DOMAIN"/>
    <property type="match status" value="1"/>
</dbReference>
<dbReference type="PROSITE" id="PS50848">
    <property type="entry name" value="START"/>
    <property type="match status" value="1"/>
</dbReference>
<proteinExistence type="evidence at protein level"/>
<comment type="function">
    <text evidence="8">Shelters ceramides and diacylglycerol lipids inside its START domain and mediates the intracellular trafficking of ceramides and diacylglycerol lipids in a non-vesicular manner (PubMed:19005213).</text>
</comment>
<comment type="catalytic activity">
    <reaction evidence="7">
        <text>N-hexadecanoylsphing-4-enine(in) = N-hexadecanoylsphing-4-enine(out)</text>
        <dbReference type="Rhea" id="RHEA:45720"/>
        <dbReference type="ChEBI" id="CHEBI:72959"/>
    </reaction>
</comment>
<comment type="subunit">
    <text evidence="2">Interacts with VAPA and VAPB. Interaction with VAPB is less efficient than with VAPA. Interacts (via FFAT motif) with the MOSPD2 (via MSP domain).</text>
</comment>
<comment type="subcellular location">
    <subcellularLocation>
        <location evidence="7">Cytoplasm</location>
    </subcellularLocation>
    <subcellularLocation>
        <location evidence="7">Golgi apparatus</location>
    </subcellularLocation>
    <subcellularLocation>
        <location evidence="2">Endoplasmic reticulum</location>
    </subcellularLocation>
    <text evidence="2">Preferentially localized to the Golgi apparatus.</text>
</comment>
<comment type="domain">
    <text evidence="2">The START domain recognizes ceramides and diacylglycerol lipids, interacts with membranes, and mediates the intermembrane transfer of ceramides and diacylglycerol lipids.</text>
</comment>
<comment type="domain">
    <text evidence="2">The PH domain targets the Golgi apparatus.</text>
</comment>
<comment type="domain">
    <text evidence="2">The FFAT motif is required for interaction with VAPA, VAPB and MOSPD2.</text>
</comment>
<comment type="PTM">
    <text evidence="2 8">Phosphorylation on Ser-132 decreases the affinity toward phosphatidylinositol 4-phosphate at Golgi membranes and reduces ceramide transfer activity (By similarity). Inactivated by hyperphosphorylation of serine residues by CSNK1G2/CK1 that triggers dissociation from the Golgi complex, thus down-regulating ER-to-Golgi transport of ceramide and sphingomyelin synthesis (PubMed:19005213).</text>
</comment>
<feature type="chain" id="PRO_0000307355" description="Ceramide transfer protein">
    <location>
        <begin position="1"/>
        <end position="598"/>
    </location>
</feature>
<feature type="domain" description="PH" evidence="4">
    <location>
        <begin position="23"/>
        <end position="117"/>
    </location>
</feature>
<feature type="domain" description="START" evidence="5">
    <location>
        <begin position="363"/>
        <end position="592"/>
    </location>
</feature>
<feature type="region of interest" description="Disordered" evidence="6">
    <location>
        <begin position="1"/>
        <end position="24"/>
    </location>
</feature>
<feature type="region of interest" description="Disordered" evidence="6">
    <location>
        <begin position="202"/>
        <end position="221"/>
    </location>
</feature>
<feature type="coiled-coil region" evidence="3">
    <location>
        <begin position="268"/>
        <end position="301"/>
    </location>
</feature>
<feature type="short sequence motif" description="FFAT" evidence="2">
    <location>
        <begin position="321"/>
        <end position="327"/>
    </location>
</feature>
<feature type="compositionally biased region" description="Polar residues" evidence="6">
    <location>
        <begin position="1"/>
        <end position="11"/>
    </location>
</feature>
<feature type="binding site" evidence="2">
    <location>
        <position position="446"/>
    </location>
    <ligand>
        <name>an N-acylsphing-4-enine</name>
        <dbReference type="ChEBI" id="CHEBI:52639"/>
    </ligand>
</feature>
<feature type="binding site" evidence="2">
    <location>
        <position position="467"/>
    </location>
    <ligand>
        <name>an N-acylsphing-4-enine</name>
        <dbReference type="ChEBI" id="CHEBI:52639"/>
    </ligand>
</feature>
<feature type="binding site" evidence="2">
    <location>
        <position position="504"/>
    </location>
    <ligand>
        <name>an N-acylsphing-4-enine</name>
        <dbReference type="ChEBI" id="CHEBI:52639"/>
    </ligand>
</feature>
<feature type="binding site" evidence="2">
    <location>
        <position position="553"/>
    </location>
    <ligand>
        <name>an N-acylsphing-4-enine</name>
        <dbReference type="ChEBI" id="CHEBI:52639"/>
    </ligand>
</feature>
<feature type="modified residue" description="Phosphoserine" evidence="2">
    <location>
        <position position="126"/>
    </location>
</feature>
<feature type="modified residue" description="Phosphoserine; by PKD" evidence="2">
    <location>
        <position position="132"/>
    </location>
</feature>
<feature type="modified residue" description="Phosphoserine" evidence="1">
    <location>
        <position position="135"/>
    </location>
</feature>
<feature type="modified residue" description="Phosphoserine" evidence="2">
    <location>
        <position position="315"/>
    </location>
</feature>
<feature type="sequence variant" description="In LY-A cell line; destroys the phosphatidylinositol 4-phosphate-binding activity, abolishes localization to the Golgi apparatus." evidence="7">
    <original>G</original>
    <variation>E</variation>
    <location>
        <position position="67"/>
    </location>
</feature>
<name>CERT_CRIGR</name>
<organism>
    <name type="scientific">Cricetulus griseus</name>
    <name type="common">Chinese hamster</name>
    <name type="synonym">Cricetulus barabensis griseus</name>
    <dbReference type="NCBI Taxonomy" id="10029"/>
    <lineage>
        <taxon>Eukaryota</taxon>
        <taxon>Metazoa</taxon>
        <taxon>Chordata</taxon>
        <taxon>Craniata</taxon>
        <taxon>Vertebrata</taxon>
        <taxon>Euteleostomi</taxon>
        <taxon>Mammalia</taxon>
        <taxon>Eutheria</taxon>
        <taxon>Euarchontoglires</taxon>
        <taxon>Glires</taxon>
        <taxon>Rodentia</taxon>
        <taxon>Myomorpha</taxon>
        <taxon>Muroidea</taxon>
        <taxon>Cricetidae</taxon>
        <taxon>Cricetinae</taxon>
        <taxon>Cricetulus</taxon>
    </lineage>
</organism>
<protein>
    <recommendedName>
        <fullName evidence="9">Ceramide transfer protein</fullName>
        <shortName>CERT</shortName>
    </recommendedName>
    <alternativeName>
        <fullName>Collagen type IV alpha-3-binding protein</fullName>
    </alternativeName>
</protein>